<protein>
    <recommendedName>
        <fullName evidence="1">AMP phosphorylase</fullName>
        <shortName evidence="1">AMPpase</shortName>
        <ecNumber evidence="1">2.4.2.57</ecNumber>
    </recommendedName>
    <alternativeName>
        <fullName evidence="1">Nucleoside monophosphate phosphorylase</fullName>
        <shortName evidence="1">NMP phosphorylase</shortName>
    </alternativeName>
</protein>
<name>AMPPA_PYRHO</name>
<organism>
    <name type="scientific">Pyrococcus horikoshii (strain ATCC 700860 / DSM 12428 / JCM 9974 / NBRC 100139 / OT-3)</name>
    <dbReference type="NCBI Taxonomy" id="70601"/>
    <lineage>
        <taxon>Archaea</taxon>
        <taxon>Methanobacteriati</taxon>
        <taxon>Methanobacteriota</taxon>
        <taxon>Thermococci</taxon>
        <taxon>Thermococcales</taxon>
        <taxon>Thermococcaceae</taxon>
        <taxon>Pyrococcus</taxon>
    </lineage>
</organism>
<accession>O59251</accession>
<sequence>MRAKVKILKIKTGSFNVFISPRDAEEWKLHPNDLVKIESGKRSIYASVAIGDFIEDGEVGLSQDILSSYQFSEGEVVSITPSGTPESVKYIKKKMKGEKLRKVEIETIIRDIVDRKLRNTEISAFITAIEINGLSMDEIAALTIAMAETGDMLDIDRKPIMDVHSIGGVPGNKTNILVVPIVAAAGLTIPKTSSRAITSAAGTADVVEVLTNVKLSLDEIKRIVEKIGACLVWGGALNLAPADDLTIHVERRLSLDPRGLMLASIMSKKYAIGSQYILIDIPTGKGAKVETMDEARTLAKDFIELGKKLGQYVEVAITYGGQPIGYAIGPALEAKEALETLMTGKGPGSLVEKATGLAGILLEMGGVAPKGMGKKVAKEILESGKAYEKMKEIIEEQGGDPNIKPEDIPIGDKTYTIHAQTGGYVTGIDNRAITAIAREAGAPEDKGAGVRLHVKVGEKVKEGDPLITIHAESESRLEKAIVLARRLEPIKIEGMVLQVIGNI</sequence>
<evidence type="ECO:0000255" key="1">
    <source>
        <dbReference type="HAMAP-Rule" id="MF_02132"/>
    </source>
</evidence>
<proteinExistence type="inferred from homology"/>
<dbReference type="EC" id="2.4.2.57" evidence="1"/>
<dbReference type="EMBL" id="BA000001">
    <property type="protein sequence ID" value="BAA30710.1"/>
    <property type="molecule type" value="Genomic_DNA"/>
</dbReference>
<dbReference type="PIR" id="F71038">
    <property type="entry name" value="F71038"/>
</dbReference>
<dbReference type="RefSeq" id="WP_010885672.1">
    <property type="nucleotide sequence ID" value="NC_000961.1"/>
</dbReference>
<dbReference type="SMR" id="O59251"/>
<dbReference type="STRING" id="70601.gene:9378588"/>
<dbReference type="EnsemblBacteria" id="BAA30710">
    <property type="protein sequence ID" value="BAA30710"/>
    <property type="gene ID" value="BAA30710"/>
</dbReference>
<dbReference type="GeneID" id="1442451"/>
<dbReference type="KEGG" id="pho:PH1598"/>
<dbReference type="eggNOG" id="arCOG02013">
    <property type="taxonomic scope" value="Archaea"/>
</dbReference>
<dbReference type="OrthoDB" id="9827at2157"/>
<dbReference type="Proteomes" id="UP000000752">
    <property type="component" value="Chromosome"/>
</dbReference>
<dbReference type="GO" id="GO:0005829">
    <property type="term" value="C:cytosol"/>
    <property type="evidence" value="ECO:0007669"/>
    <property type="project" value="TreeGrafter"/>
</dbReference>
<dbReference type="GO" id="GO:0004645">
    <property type="term" value="F:1,4-alpha-oligoglucan phosphorylase activity"/>
    <property type="evidence" value="ECO:0007669"/>
    <property type="project" value="InterPro"/>
</dbReference>
<dbReference type="GO" id="GO:0016208">
    <property type="term" value="F:AMP binding"/>
    <property type="evidence" value="ECO:0007669"/>
    <property type="project" value="UniProtKB-UniRule"/>
</dbReference>
<dbReference type="GO" id="GO:0016763">
    <property type="term" value="F:pentosyltransferase activity"/>
    <property type="evidence" value="ECO:0007669"/>
    <property type="project" value="UniProtKB-UniRule"/>
</dbReference>
<dbReference type="GO" id="GO:0006196">
    <property type="term" value="P:AMP catabolic process"/>
    <property type="evidence" value="ECO:0007669"/>
    <property type="project" value="UniProtKB-UniRule"/>
</dbReference>
<dbReference type="GO" id="GO:0046125">
    <property type="term" value="P:pyrimidine deoxyribonucleoside metabolic process"/>
    <property type="evidence" value="ECO:0007669"/>
    <property type="project" value="InterPro"/>
</dbReference>
<dbReference type="GO" id="GO:0006206">
    <property type="term" value="P:pyrimidine nucleobase metabolic process"/>
    <property type="evidence" value="ECO:0007669"/>
    <property type="project" value="InterPro"/>
</dbReference>
<dbReference type="FunFam" id="3.90.1170.30:FF:000004">
    <property type="entry name" value="AMP phosphorylase"/>
    <property type="match status" value="1"/>
</dbReference>
<dbReference type="Gene3D" id="1.20.970.50">
    <property type="match status" value="1"/>
</dbReference>
<dbReference type="Gene3D" id="2.40.40.20">
    <property type="match status" value="1"/>
</dbReference>
<dbReference type="Gene3D" id="3.40.1030.10">
    <property type="entry name" value="Nucleoside phosphorylase/phosphoribosyltransferase catalytic domain"/>
    <property type="match status" value="1"/>
</dbReference>
<dbReference type="Gene3D" id="3.90.1170.30">
    <property type="entry name" value="Pyrimidine nucleoside phosphorylase-like, C-terminal domain"/>
    <property type="match status" value="1"/>
</dbReference>
<dbReference type="HAMAP" id="MF_02132">
    <property type="entry name" value="AMP_phosphorylase"/>
    <property type="match status" value="1"/>
</dbReference>
<dbReference type="InterPro" id="IPR017713">
    <property type="entry name" value="AMP_phosphorylase"/>
</dbReference>
<dbReference type="InterPro" id="IPR009010">
    <property type="entry name" value="Asp_de-COase-like_dom_sf"/>
</dbReference>
<dbReference type="InterPro" id="IPR000312">
    <property type="entry name" value="Glycosyl_Trfase_fam3"/>
</dbReference>
<dbReference type="InterPro" id="IPR017459">
    <property type="entry name" value="Glycosyl_Trfase_fam3_N_dom"/>
</dbReference>
<dbReference type="InterPro" id="IPR036320">
    <property type="entry name" value="Glycosyl_Trfase_fam3_N_dom_sf"/>
</dbReference>
<dbReference type="InterPro" id="IPR035902">
    <property type="entry name" value="Nuc_phospho_transferase"/>
</dbReference>
<dbReference type="InterPro" id="IPR036566">
    <property type="entry name" value="PYNP-like_C_sf"/>
</dbReference>
<dbReference type="InterPro" id="IPR013102">
    <property type="entry name" value="PYNP_C"/>
</dbReference>
<dbReference type="InterPro" id="IPR017872">
    <property type="entry name" value="Pyrmidine_PPase_CS"/>
</dbReference>
<dbReference type="InterPro" id="IPR013466">
    <property type="entry name" value="Thymidine/AMP_Pase"/>
</dbReference>
<dbReference type="InterPro" id="IPR000053">
    <property type="entry name" value="Thymidine/pyrmidine_PPase"/>
</dbReference>
<dbReference type="NCBIfam" id="TIGR03327">
    <property type="entry name" value="AMP_phos"/>
    <property type="match status" value="1"/>
</dbReference>
<dbReference type="NCBIfam" id="TIGR02645">
    <property type="entry name" value="ARCH_P_rylase"/>
    <property type="match status" value="1"/>
</dbReference>
<dbReference type="NCBIfam" id="NF003338">
    <property type="entry name" value="PRK04350.1"/>
    <property type="match status" value="1"/>
</dbReference>
<dbReference type="PANTHER" id="PTHR10515">
    <property type="entry name" value="THYMIDINE PHOSPHORYLASE"/>
    <property type="match status" value="1"/>
</dbReference>
<dbReference type="PANTHER" id="PTHR10515:SF0">
    <property type="entry name" value="THYMIDINE PHOSPHORYLASE"/>
    <property type="match status" value="1"/>
</dbReference>
<dbReference type="Pfam" id="PF02885">
    <property type="entry name" value="Glycos_trans_3N"/>
    <property type="match status" value="1"/>
</dbReference>
<dbReference type="Pfam" id="PF00591">
    <property type="entry name" value="Glycos_transf_3"/>
    <property type="match status" value="1"/>
</dbReference>
<dbReference type="Pfam" id="PF07831">
    <property type="entry name" value="PYNP_C"/>
    <property type="match status" value="1"/>
</dbReference>
<dbReference type="PIRSF" id="PIRSF000478">
    <property type="entry name" value="TP_PyNP"/>
    <property type="match status" value="1"/>
</dbReference>
<dbReference type="SMART" id="SM00941">
    <property type="entry name" value="PYNP_C"/>
    <property type="match status" value="1"/>
</dbReference>
<dbReference type="SUPFAM" id="SSF50692">
    <property type="entry name" value="ADC-like"/>
    <property type="match status" value="1"/>
</dbReference>
<dbReference type="SUPFAM" id="SSF52418">
    <property type="entry name" value="Nucleoside phosphorylase/phosphoribosyltransferase catalytic domain"/>
    <property type="match status" value="1"/>
</dbReference>
<dbReference type="SUPFAM" id="SSF47648">
    <property type="entry name" value="Nucleoside phosphorylase/phosphoribosyltransferase N-terminal domain"/>
    <property type="match status" value="1"/>
</dbReference>
<dbReference type="SUPFAM" id="SSF54680">
    <property type="entry name" value="Pyrimidine nucleoside phosphorylase C-terminal domain"/>
    <property type="match status" value="1"/>
</dbReference>
<dbReference type="PROSITE" id="PS00647">
    <property type="entry name" value="THYMID_PHOSPHORYLASE"/>
    <property type="match status" value="1"/>
</dbReference>
<gene>
    <name type="ordered locus">PH1598</name>
</gene>
<comment type="function">
    <text evidence="1">Catalyzes the conversion of AMP and phosphate to adenine and ribose 1,5-bisphosphate (R15P). Exhibits phosphorylase activity toward CMP and UMP in addition to AMP. Functions in an archaeal AMP degradation pathway, together with R15P isomerase and RubisCO.</text>
</comment>
<comment type="catalytic activity">
    <reaction evidence="1">
        <text>AMP + phosphate = alpha-D-ribose 1,5-bisphosphate + adenine</text>
        <dbReference type="Rhea" id="RHEA:36975"/>
        <dbReference type="ChEBI" id="CHEBI:16708"/>
        <dbReference type="ChEBI" id="CHEBI:43474"/>
        <dbReference type="ChEBI" id="CHEBI:68688"/>
        <dbReference type="ChEBI" id="CHEBI:456215"/>
        <dbReference type="EC" id="2.4.2.57"/>
    </reaction>
</comment>
<comment type="catalytic activity">
    <reaction evidence="1">
        <text>CMP + phosphate = cytosine + alpha-D-ribose 1,5-bisphosphate</text>
        <dbReference type="Rhea" id="RHEA:36987"/>
        <dbReference type="ChEBI" id="CHEBI:16040"/>
        <dbReference type="ChEBI" id="CHEBI:43474"/>
        <dbReference type="ChEBI" id="CHEBI:60377"/>
        <dbReference type="ChEBI" id="CHEBI:68688"/>
        <dbReference type="EC" id="2.4.2.57"/>
    </reaction>
</comment>
<comment type="catalytic activity">
    <reaction evidence="1">
        <text>UMP + phosphate = alpha-D-ribose 1,5-bisphosphate + uracil</text>
        <dbReference type="Rhea" id="RHEA:36991"/>
        <dbReference type="ChEBI" id="CHEBI:17568"/>
        <dbReference type="ChEBI" id="CHEBI:43474"/>
        <dbReference type="ChEBI" id="CHEBI:57865"/>
        <dbReference type="ChEBI" id="CHEBI:68688"/>
        <dbReference type="EC" id="2.4.2.57"/>
    </reaction>
</comment>
<comment type="similarity">
    <text evidence="1">Belongs to the thymidine/pyrimidine-nucleoside phosphorylase family. Type 2 subfamily.</text>
</comment>
<feature type="chain" id="PRO_0000059092" description="AMP phosphorylase">
    <location>
        <begin position="1"/>
        <end position="503"/>
    </location>
</feature>
<feature type="active site" description="Proton donor" evidence="1">
    <location>
        <position position="256"/>
    </location>
</feature>
<feature type="binding site" evidence="1">
    <location>
        <position position="168"/>
    </location>
    <ligand>
        <name>AMP</name>
        <dbReference type="ChEBI" id="CHEBI:456215"/>
    </ligand>
</feature>
<feature type="binding site" evidence="1">
    <location>
        <begin position="194"/>
        <end position="199"/>
    </location>
    <ligand>
        <name>AMP</name>
        <dbReference type="ChEBI" id="CHEBI:456215"/>
    </ligand>
</feature>
<feature type="binding site" evidence="1">
    <location>
        <position position="203"/>
    </location>
    <ligand>
        <name>AMP</name>
        <dbReference type="ChEBI" id="CHEBI:456215"/>
    </ligand>
</feature>
<feature type="binding site" evidence="1">
    <location>
        <position position="264"/>
    </location>
    <ligand>
        <name>AMP</name>
        <dbReference type="ChEBI" id="CHEBI:456215"/>
    </ligand>
</feature>
<feature type="binding site" evidence="1">
    <location>
        <position position="288"/>
    </location>
    <ligand>
        <name>AMP</name>
        <dbReference type="ChEBI" id="CHEBI:456215"/>
    </ligand>
</feature>
<keyword id="KW-0328">Glycosyltransferase</keyword>
<keyword id="KW-0808">Transferase</keyword>
<reference key="1">
    <citation type="journal article" date="1998" name="DNA Res.">
        <title>Complete sequence and gene organization of the genome of a hyper-thermophilic archaebacterium, Pyrococcus horikoshii OT3.</title>
        <authorList>
            <person name="Kawarabayasi Y."/>
            <person name="Sawada M."/>
            <person name="Horikawa H."/>
            <person name="Haikawa Y."/>
            <person name="Hino Y."/>
            <person name="Yamamoto S."/>
            <person name="Sekine M."/>
            <person name="Baba S."/>
            <person name="Kosugi H."/>
            <person name="Hosoyama A."/>
            <person name="Nagai Y."/>
            <person name="Sakai M."/>
            <person name="Ogura K."/>
            <person name="Otsuka R."/>
            <person name="Nakazawa H."/>
            <person name="Takamiya M."/>
            <person name="Ohfuku Y."/>
            <person name="Funahashi T."/>
            <person name="Tanaka T."/>
            <person name="Kudoh Y."/>
            <person name="Yamazaki J."/>
            <person name="Kushida N."/>
            <person name="Oguchi A."/>
            <person name="Aoki K."/>
            <person name="Yoshizawa T."/>
            <person name="Nakamura Y."/>
            <person name="Robb F.T."/>
            <person name="Horikoshi K."/>
            <person name="Masuchi Y."/>
            <person name="Shizuya H."/>
            <person name="Kikuchi H."/>
        </authorList>
    </citation>
    <scope>NUCLEOTIDE SEQUENCE [LARGE SCALE GENOMIC DNA]</scope>
    <source>
        <strain>ATCC 700860 / DSM 12428 / JCM 9974 / NBRC 100139 / OT-3</strain>
    </source>
</reference>